<proteinExistence type="inferred from homology"/>
<organism>
    <name type="scientific">Vibrio cholerae serotype O1 (strain ATCC 39315 / El Tor Inaba N16961)</name>
    <dbReference type="NCBI Taxonomy" id="243277"/>
    <lineage>
        <taxon>Bacteria</taxon>
        <taxon>Pseudomonadati</taxon>
        <taxon>Pseudomonadota</taxon>
        <taxon>Gammaproteobacteria</taxon>
        <taxon>Vibrionales</taxon>
        <taxon>Vibrionaceae</taxon>
        <taxon>Vibrio</taxon>
    </lineage>
</organism>
<reference key="1">
    <citation type="journal article" date="2001" name="Infect. Immun.">
        <title>Comparison of Vibrio cholerae pathogenicity islands in sixth and seventh pandemic strains.</title>
        <authorList>
            <person name="Karaolis D.K.R."/>
            <person name="Lan R."/>
            <person name="Kaper J.B."/>
            <person name="Reeves P.R."/>
        </authorList>
    </citation>
    <scope>NUCLEOTIDE SEQUENCE [GENOMIC DNA]</scope>
    <source>
        <strain>ATCC 39315 / El Tor Inaba N16961</strain>
    </source>
</reference>
<reference key="2">
    <citation type="journal article" date="2000" name="Nature">
        <title>DNA sequence of both chromosomes of the cholera pathogen Vibrio cholerae.</title>
        <authorList>
            <person name="Heidelberg J.F."/>
            <person name="Eisen J.A."/>
            <person name="Nelson W.C."/>
            <person name="Clayton R.A."/>
            <person name="Gwinn M.L."/>
            <person name="Dodson R.J."/>
            <person name="Haft D.H."/>
            <person name="Hickey E.K."/>
            <person name="Peterson J.D."/>
            <person name="Umayam L.A."/>
            <person name="Gill S.R."/>
            <person name="Nelson K.E."/>
            <person name="Read T.D."/>
            <person name="Tettelin H."/>
            <person name="Richardson D.L."/>
            <person name="Ermolaeva M.D."/>
            <person name="Vamathevan J.J."/>
            <person name="Bass S."/>
            <person name="Qin H."/>
            <person name="Dragoi I."/>
            <person name="Sellers P."/>
            <person name="McDonald L.A."/>
            <person name="Utterback T.R."/>
            <person name="Fleischmann R.D."/>
            <person name="Nierman W.C."/>
            <person name="White O."/>
            <person name="Salzberg S.L."/>
            <person name="Smith H.O."/>
            <person name="Colwell R.R."/>
            <person name="Mekalanos J.J."/>
            <person name="Venter J.C."/>
            <person name="Fraser C.M."/>
        </authorList>
    </citation>
    <scope>NUCLEOTIDE SEQUENCE [LARGE SCALE GENOMIC DNA]</scope>
    <source>
        <strain>ATCC 39315 / El Tor Inaba N16961</strain>
    </source>
</reference>
<reference key="3">
    <citation type="journal article" date="1992" name="J. Bacteriol.">
        <title>Structural analysis of the acfA and acfD genes of Vibrio cholerae: effects of DNA topology and transcriptional activators on expression.</title>
        <authorList>
            <person name="Parsot C."/>
            <person name="Mekalanos J.J."/>
        </authorList>
    </citation>
    <scope>NUCLEOTIDE SEQUENCE [GENOMIC DNA] OF 1-53</scope>
</reference>
<accession>P0C6F0</accession>
<accession>Q53270</accession>
<accession>Q56593</accession>
<accession>Q56615</accession>
<accession>Q56616</accession>
<accession>Q56617</accession>
<accession>Q57522</accession>
<accession>Q9KTQ4</accession>
<name>ACFD_VIBCH</name>
<protein>
    <recommendedName>
        <fullName>Accessory colonization factor AcfD</fullName>
    </recommendedName>
</protein>
<comment type="subcellular location">
    <subcellularLocation>
        <location evidence="1">Cell membrane</location>
        <topology evidence="1">Lipid-anchor</topology>
    </subcellularLocation>
</comment>
<feature type="signal peptide" evidence="1">
    <location>
        <begin position="1"/>
        <end position="16"/>
    </location>
</feature>
<feature type="chain" id="PRO_0000020620" description="Accessory colonization factor AcfD">
    <location>
        <begin position="17"/>
        <end position="1520"/>
    </location>
</feature>
<feature type="domain" description="Peptidase M60" evidence="2">
    <location>
        <begin position="1085"/>
        <end position="1388"/>
    </location>
</feature>
<feature type="lipid moiety-binding region" description="N-palmitoyl cysteine" evidence="1">
    <location>
        <position position="17"/>
    </location>
</feature>
<feature type="lipid moiety-binding region" description="S-diacylglycerol cysteine" evidence="1">
    <location>
        <position position="17"/>
    </location>
</feature>
<feature type="sequence conflict" description="In Ref. 3; AAB22796." evidence="3" ref="3">
    <original>PD</original>
    <variation>RI</variation>
    <location>
        <begin position="52"/>
        <end position="53"/>
    </location>
</feature>
<sequence>MKIRIVSLIVLGFLIGCKHESIITPTVPADGSGGNALNPGLVGGYLPDIGVPDPIISLSMTLDGNLKFDSSLLCNDQDASHFQISQKDNVFCTINGRSIATFTAPFDANKNGRNTDSEVLSLISADEYRDSPVRQENLQILMKNMATIHGDKISLVFRSTLDALTFENYLRHNLDLPKDQFLEAITEKIANDNQVDKQPSTHVPNISPSFTPGTSSNLNSPFVSANAEESLSYIPTDVIPSLGRLLDSQGRVINGVSYFSNNTRGITGVDKTGAILNDGSFEFSWGDIISFSIDTFELGSTRANKTDFYISELGKDNEGKNAEALIHRYASIDDSKLIIPDKVTQIFSLYPNVINEVISLSLPNGDIELDIGDGKTQIVPGEFFKQFDSGLAALIDQSISPISRFKFEDSLPKKKSAIDSESSQIQDIINKLWGATDTVQANGWKKVDRFHIFHDSTNFYGSTGSARAQAAVNIANSAFPVLMARNDNNYWIDFGKPKAWDSNSLAFITEAPSTVVPDKVSEDTSTFNLPFISLGEIGKGKLMVLGNARYNSVLVCPNGFSWGGTVKNGTCSLSSDRDDMANFFSNVIRYLTGSTSNDVIVGTNIPEVYFKSSGQTMGSKANFELDSRFSKQTQQLTSFHDLDVNTIPLIIINAYDYKGKNINSPYDIPLSADVGSPKLSRSDVTDLIDYINNGGSVLMMETIINTNNSEISRLLDSAGIAFGIGNSVVADGNGPSGGHPDRPRSQREHGIWVIERYAAVEDESSGQQTLPYVINSDGSIEWKYIVENRPDDKPKLEVASWVESEAGDKLITHYAFIDESQHWKKDISGKIIYNVAGKPEVDNASLSLAKNKVLDAFKNSSGQRAYSECKNSEFHYEINCLEYRPGNSIPITGGLYVPRYTDIKLGESEANAMVKAANLGTNIHALYQHERYFRTKGKSGARLNSVDLNRIYQNMSVWLWNDLDYRYDDKQSDELGFKVFTQYLNCYTSNNAGGNTTCPEELKDELTQLGMIYDEKSGSYAGQMDPSYPLNYMEKPLTRLMLGRSFWDLDIKVDVRKYPGEVTTRSGGGDITLDMRNNTAAWFAGNRQPTGQWAEAHQPFSVSVSGETSPVTITIALADDLTGREKHELGLKRPPRMSKSFVIGGDSPKMQTFTVPYGGLIYAQGGNSQQVKLTFSGTIDAPLYIDGKWRNPLLSGAPIGEVVSDTFIFTAPKANLNADGYLGGIEQFAKDLDQFSADLNDFYARDEGADGDKNRKATDKSMPNNRHHFVNDVAISVGAAHSGYPVMNDSFITSSRSLNTMPLNSWLLWHEVGHNSAEAPFNVDGATEVVNNLLALYMQDRHQGKMSRVEQDIRYAFDFVNAEHGHAWGAGGAGERLVMFAQLKEWAETEFDINDWYNDKLPGFYIEESGIKGWNLFKLMHRLMRNENDDQINMKGENQCKISGIGKSDLLMLCASYAAQTDLSEFFKAWNPGSKAFLYPDDPQPYYEGGITPSGIQRVKSLKLNLPQKNPLSINSVTQH</sequence>
<evidence type="ECO:0000255" key="1">
    <source>
        <dbReference type="PROSITE-ProRule" id="PRU00303"/>
    </source>
</evidence>
<evidence type="ECO:0000255" key="2">
    <source>
        <dbReference type="PROSITE-ProRule" id="PRU01060"/>
    </source>
</evidence>
<evidence type="ECO:0000305" key="3"/>
<dbReference type="EMBL" id="AF325734">
    <property type="protein sequence ID" value="AAK20802.1"/>
    <property type="molecule type" value="Genomic_DNA"/>
</dbReference>
<dbReference type="EMBL" id="AE003852">
    <property type="protein sequence ID" value="AAF94008.1"/>
    <property type="molecule type" value="Genomic_DNA"/>
</dbReference>
<dbReference type="EMBL" id="S41756">
    <property type="protein sequence ID" value="AAB22796.1"/>
    <property type="molecule type" value="Genomic_DNA"/>
</dbReference>
<dbReference type="PIR" id="A42962">
    <property type="entry name" value="A42962"/>
</dbReference>
<dbReference type="PIR" id="B82274">
    <property type="entry name" value="B82274"/>
</dbReference>
<dbReference type="RefSeq" id="NP_230493.1">
    <property type="nucleotide sequence ID" value="NC_002505.1"/>
</dbReference>
<dbReference type="RefSeq" id="WP_000702220.1">
    <property type="nucleotide sequence ID" value="NZ_LT906614.1"/>
</dbReference>
<dbReference type="STRING" id="243277.VC_0845"/>
<dbReference type="MEROPS" id="M98.001"/>
<dbReference type="EnsemblBacteria" id="AAF94008">
    <property type="protein sequence ID" value="AAF94008"/>
    <property type="gene ID" value="VC_0845"/>
</dbReference>
<dbReference type="KEGG" id="vch:VC_0845"/>
<dbReference type="PATRIC" id="fig|243277.26.peg.805"/>
<dbReference type="eggNOG" id="COG3064">
    <property type="taxonomic scope" value="Bacteria"/>
</dbReference>
<dbReference type="HOGENOM" id="CLU_006312_0_0_6"/>
<dbReference type="Proteomes" id="UP000000584">
    <property type="component" value="Chromosome 1"/>
</dbReference>
<dbReference type="GO" id="GO:0005886">
    <property type="term" value="C:plasma membrane"/>
    <property type="evidence" value="ECO:0000318"/>
    <property type="project" value="GO_Central"/>
</dbReference>
<dbReference type="GO" id="GO:0044325">
    <property type="term" value="F:transmembrane transporter binding"/>
    <property type="evidence" value="ECO:0000318"/>
    <property type="project" value="GO_Central"/>
</dbReference>
<dbReference type="Gene3D" id="3.40.390.80">
    <property type="entry name" value="Peptidase M60, enhancin-like domain 2"/>
    <property type="match status" value="1"/>
</dbReference>
<dbReference type="Gene3D" id="1.10.390.30">
    <property type="entry name" value="Peptidase M60, enhancin-like domain 3"/>
    <property type="match status" value="1"/>
</dbReference>
<dbReference type="InterPro" id="IPR025385">
    <property type="entry name" value="DUF4092"/>
</dbReference>
<dbReference type="InterPro" id="IPR035423">
    <property type="entry name" value="M60-like_N"/>
</dbReference>
<dbReference type="InterPro" id="IPR042279">
    <property type="entry name" value="Pep_M60_3"/>
</dbReference>
<dbReference type="InterPro" id="IPR031161">
    <property type="entry name" value="Peptidase_M60_dom"/>
</dbReference>
<dbReference type="InterPro" id="IPR051244">
    <property type="entry name" value="TCAF"/>
</dbReference>
<dbReference type="NCBIfam" id="NF037974">
    <property type="entry name" value="SslE_AcfD_Zn_LP"/>
    <property type="match status" value="1"/>
</dbReference>
<dbReference type="PANTHER" id="PTHR15730">
    <property type="entry name" value="EXPERIMENTAL AUTOIMMUNE PROSTATITIS ANTIGEN 2-RELATED"/>
    <property type="match status" value="1"/>
</dbReference>
<dbReference type="PANTHER" id="PTHR15730:SF5">
    <property type="entry name" value="SI:CH211-210B2.2-RELATED"/>
    <property type="match status" value="1"/>
</dbReference>
<dbReference type="Pfam" id="PF13322">
    <property type="entry name" value="DUF4092"/>
    <property type="match status" value="1"/>
</dbReference>
<dbReference type="Pfam" id="PF17291">
    <property type="entry name" value="M60-like_N"/>
    <property type="match status" value="1"/>
</dbReference>
<dbReference type="Pfam" id="PF13402">
    <property type="entry name" value="Peptidase_M60"/>
    <property type="match status" value="1"/>
</dbReference>
<dbReference type="SMART" id="SM01276">
    <property type="entry name" value="M60-like"/>
    <property type="match status" value="1"/>
</dbReference>
<dbReference type="PROSITE" id="PS51723">
    <property type="entry name" value="PEPTIDASE_M60"/>
    <property type="match status" value="1"/>
</dbReference>
<dbReference type="PROSITE" id="PS51257">
    <property type="entry name" value="PROKAR_LIPOPROTEIN"/>
    <property type="match status" value="1"/>
</dbReference>
<gene>
    <name type="primary">acfD</name>
    <name type="ordered locus">VC_0845</name>
</gene>
<keyword id="KW-1003">Cell membrane</keyword>
<keyword id="KW-0449">Lipoprotein</keyword>
<keyword id="KW-0472">Membrane</keyword>
<keyword id="KW-0564">Palmitate</keyword>
<keyword id="KW-1185">Reference proteome</keyword>
<keyword id="KW-0732">Signal</keyword>
<keyword id="KW-0843">Virulence</keyword>